<name>TSGA_SALPA</name>
<protein>
    <recommendedName>
        <fullName evidence="2">Protein TsgA</fullName>
    </recommendedName>
</protein>
<evidence type="ECO:0000255" key="1"/>
<evidence type="ECO:0000255" key="2">
    <source>
        <dbReference type="HAMAP-Rule" id="MF_01044"/>
    </source>
</evidence>
<sequence>MTNSNRIKLTWISFLSYALTGALVIVTGMVMGNIADYFHLPVSSMSNTFTFLNAGILISIFLNAWLMEIVPLKTQLRFGFILMVLAVAGLMFSHSLALFSAAMFVLGLVSGITMSIGTFLITQLYEGRQRGSRLLFTDSFFSMAGMIFPMVAAFLLARSIEWYWVYACIGLVYLAIFILTFGCEFPALGKHAQHSQAPVVKEKWGIGVLFLAVAALCYILGQLGFISWVPEYAKGLGMSLNDAGALVSDFWMSYMFGMWAFSFILRFFDLQRILTVLAGMAAVLMYLFITGTQAHMPWFILTLGFFSSAIYTSIITLGSQQTKVASPKLVNFILTCGTIGTMLTFVVTGPIVAHSGPQAALLTANGLYAVVFVMCFALGFVSRHRQHSSPAAH</sequence>
<dbReference type="EMBL" id="CP000026">
    <property type="protein sequence ID" value="AAV79154.1"/>
    <property type="molecule type" value="Genomic_DNA"/>
</dbReference>
<dbReference type="RefSeq" id="WP_000185219.1">
    <property type="nucleotide sequence ID" value="NC_006511.1"/>
</dbReference>
<dbReference type="SMR" id="Q5PLW2"/>
<dbReference type="KEGG" id="spt:SPA3339"/>
<dbReference type="HOGENOM" id="CLU_056916_0_0_6"/>
<dbReference type="Proteomes" id="UP000008185">
    <property type="component" value="Chromosome"/>
</dbReference>
<dbReference type="GO" id="GO:0005886">
    <property type="term" value="C:plasma membrane"/>
    <property type="evidence" value="ECO:0007669"/>
    <property type="project" value="UniProtKB-SubCell"/>
</dbReference>
<dbReference type="GO" id="GO:0022857">
    <property type="term" value="F:transmembrane transporter activity"/>
    <property type="evidence" value="ECO:0007669"/>
    <property type="project" value="InterPro"/>
</dbReference>
<dbReference type="FunFam" id="1.20.1250.20:FF:000032">
    <property type="entry name" value="Protein TsgA"/>
    <property type="match status" value="1"/>
</dbReference>
<dbReference type="FunFam" id="1.20.1250.20:FF:000052">
    <property type="entry name" value="Protein TsgA"/>
    <property type="match status" value="1"/>
</dbReference>
<dbReference type="Gene3D" id="1.20.1250.20">
    <property type="entry name" value="MFS general substrate transporter like domains"/>
    <property type="match status" value="2"/>
</dbReference>
<dbReference type="HAMAP" id="MF_01044">
    <property type="entry name" value="MFS_TsgA"/>
    <property type="match status" value="1"/>
</dbReference>
<dbReference type="InterPro" id="IPR011701">
    <property type="entry name" value="MFS"/>
</dbReference>
<dbReference type="InterPro" id="IPR020846">
    <property type="entry name" value="MFS_dom"/>
</dbReference>
<dbReference type="InterPro" id="IPR036259">
    <property type="entry name" value="MFS_trans_sf"/>
</dbReference>
<dbReference type="InterPro" id="IPR023528">
    <property type="entry name" value="MFS_TsgA"/>
</dbReference>
<dbReference type="InterPro" id="IPR050375">
    <property type="entry name" value="MFS_TsgA-like"/>
</dbReference>
<dbReference type="NCBIfam" id="NF002982">
    <property type="entry name" value="PRK03699.1"/>
    <property type="match status" value="1"/>
</dbReference>
<dbReference type="PANTHER" id="PTHR43702">
    <property type="entry name" value="L-FUCOSE-PROTON SYMPORTER"/>
    <property type="match status" value="1"/>
</dbReference>
<dbReference type="PANTHER" id="PTHR43702:SF3">
    <property type="entry name" value="PROTEIN TSGA"/>
    <property type="match status" value="1"/>
</dbReference>
<dbReference type="Pfam" id="PF07690">
    <property type="entry name" value="MFS_1"/>
    <property type="match status" value="1"/>
</dbReference>
<dbReference type="SUPFAM" id="SSF103473">
    <property type="entry name" value="MFS general substrate transporter"/>
    <property type="match status" value="1"/>
</dbReference>
<dbReference type="PROSITE" id="PS50850">
    <property type="entry name" value="MFS"/>
    <property type="match status" value="1"/>
</dbReference>
<proteinExistence type="inferred from homology"/>
<feature type="chain" id="PRO_0000206498" description="Protein TsgA">
    <location>
        <begin position="1"/>
        <end position="393"/>
    </location>
</feature>
<feature type="topological domain" description="Cytoplasmic" evidence="1">
    <location>
        <begin position="1"/>
        <end position="10"/>
    </location>
</feature>
<feature type="transmembrane region" description="Helical" evidence="2">
    <location>
        <begin position="11"/>
        <end position="31"/>
    </location>
</feature>
<feature type="topological domain" description="Periplasmic" evidence="1">
    <location>
        <begin position="32"/>
        <end position="50"/>
    </location>
</feature>
<feature type="transmembrane region" description="Helical" evidence="2">
    <location>
        <begin position="51"/>
        <end position="71"/>
    </location>
</feature>
<feature type="topological domain" description="Cytoplasmic" evidence="1">
    <location>
        <begin position="72"/>
        <end position="77"/>
    </location>
</feature>
<feature type="transmembrane region" description="Helical" evidence="2">
    <location>
        <begin position="78"/>
        <end position="98"/>
    </location>
</feature>
<feature type="topological domain" description="Periplasmic" evidence="1">
    <location>
        <begin position="99"/>
        <end position="100"/>
    </location>
</feature>
<feature type="transmembrane region" description="Helical" evidence="2">
    <location>
        <begin position="101"/>
        <end position="121"/>
    </location>
</feature>
<feature type="topological domain" description="Cytoplasmic" evidence="1">
    <location>
        <begin position="122"/>
        <end position="133"/>
    </location>
</feature>
<feature type="transmembrane region" description="Helical" evidence="2">
    <location>
        <begin position="134"/>
        <end position="154"/>
    </location>
</feature>
<feature type="topological domain" description="Periplasmic" evidence="1">
    <location>
        <begin position="155"/>
        <end position="161"/>
    </location>
</feature>
<feature type="transmembrane region" description="Helical" evidence="2">
    <location>
        <begin position="162"/>
        <end position="182"/>
    </location>
</feature>
<feature type="topological domain" description="Cytoplasmic" evidence="1">
    <location>
        <begin position="183"/>
        <end position="205"/>
    </location>
</feature>
<feature type="transmembrane region" description="Helical" evidence="2">
    <location>
        <begin position="206"/>
        <end position="226"/>
    </location>
</feature>
<feature type="topological domain" description="Periplasmic" evidence="1">
    <location>
        <begin position="227"/>
        <end position="244"/>
    </location>
</feature>
<feature type="transmembrane region" description="Helical" evidence="2">
    <location>
        <begin position="245"/>
        <end position="265"/>
    </location>
</feature>
<feature type="topological domain" description="Cytoplasmic" evidence="1">
    <location>
        <begin position="266"/>
        <end position="272"/>
    </location>
</feature>
<feature type="transmembrane region" description="Helical" evidence="2">
    <location>
        <begin position="273"/>
        <end position="293"/>
    </location>
</feature>
<feature type="topological domain" description="Periplasmic" evidence="1">
    <location>
        <begin position="294"/>
        <end position="297"/>
    </location>
</feature>
<feature type="transmembrane region" description="Helical" evidence="2">
    <location>
        <begin position="298"/>
        <end position="318"/>
    </location>
</feature>
<feature type="topological domain" description="Cytoplasmic" evidence="1">
    <location>
        <begin position="319"/>
        <end position="331"/>
    </location>
</feature>
<feature type="transmembrane region" description="Helical" evidence="2">
    <location>
        <begin position="332"/>
        <end position="352"/>
    </location>
</feature>
<feature type="topological domain" description="Periplasmic" evidence="1">
    <location>
        <begin position="353"/>
        <end position="360"/>
    </location>
</feature>
<feature type="transmembrane region" description="Helical" evidence="2">
    <location>
        <begin position="361"/>
        <end position="381"/>
    </location>
</feature>
<feature type="topological domain" description="Cytoplasmic" evidence="1">
    <location>
        <begin position="382"/>
        <end position="393"/>
    </location>
</feature>
<accession>Q5PLW2</accession>
<comment type="subcellular location">
    <subcellularLocation>
        <location evidence="2">Cell inner membrane</location>
        <topology evidence="2">Multi-pass membrane protein</topology>
    </subcellularLocation>
</comment>
<comment type="similarity">
    <text evidence="2">Belongs to the major facilitator superfamily. TsgA family.</text>
</comment>
<gene>
    <name evidence="2" type="primary">tsgA</name>
    <name type="ordered locus">SPA3339</name>
</gene>
<keyword id="KW-0997">Cell inner membrane</keyword>
<keyword id="KW-1003">Cell membrane</keyword>
<keyword id="KW-0472">Membrane</keyword>
<keyword id="KW-0812">Transmembrane</keyword>
<keyword id="KW-1133">Transmembrane helix</keyword>
<reference key="1">
    <citation type="journal article" date="2004" name="Nat. Genet.">
        <title>Comparison of genome degradation in Paratyphi A and Typhi, human-restricted serovars of Salmonella enterica that cause typhoid.</title>
        <authorList>
            <person name="McClelland M."/>
            <person name="Sanderson K.E."/>
            <person name="Clifton S.W."/>
            <person name="Latreille P."/>
            <person name="Porwollik S."/>
            <person name="Sabo A."/>
            <person name="Meyer R."/>
            <person name="Bieri T."/>
            <person name="Ozersky P."/>
            <person name="McLellan M."/>
            <person name="Harkins C.R."/>
            <person name="Wang C."/>
            <person name="Nguyen C."/>
            <person name="Berghoff A."/>
            <person name="Elliott G."/>
            <person name="Kohlberg S."/>
            <person name="Strong C."/>
            <person name="Du F."/>
            <person name="Carter J."/>
            <person name="Kremizki C."/>
            <person name="Layman D."/>
            <person name="Leonard S."/>
            <person name="Sun H."/>
            <person name="Fulton L."/>
            <person name="Nash W."/>
            <person name="Miner T."/>
            <person name="Minx P."/>
            <person name="Delehaunty K."/>
            <person name="Fronick C."/>
            <person name="Magrini V."/>
            <person name="Nhan M."/>
            <person name="Warren W."/>
            <person name="Florea L."/>
            <person name="Spieth J."/>
            <person name="Wilson R.K."/>
        </authorList>
    </citation>
    <scope>NUCLEOTIDE SEQUENCE [LARGE SCALE GENOMIC DNA]</scope>
    <source>
        <strain>ATCC 9150 / SARB42</strain>
    </source>
</reference>
<organism>
    <name type="scientific">Salmonella paratyphi A (strain ATCC 9150 / SARB42)</name>
    <dbReference type="NCBI Taxonomy" id="295319"/>
    <lineage>
        <taxon>Bacteria</taxon>
        <taxon>Pseudomonadati</taxon>
        <taxon>Pseudomonadota</taxon>
        <taxon>Gammaproteobacteria</taxon>
        <taxon>Enterobacterales</taxon>
        <taxon>Enterobacteriaceae</taxon>
        <taxon>Salmonella</taxon>
    </lineage>
</organism>